<keyword id="KW-0050">Antiport</keyword>
<keyword id="KW-0997">Cell inner membrane</keyword>
<keyword id="KW-1003">Cell membrane</keyword>
<keyword id="KW-0406">Ion transport</keyword>
<keyword id="KW-0472">Membrane</keyword>
<keyword id="KW-0915">Sodium</keyword>
<keyword id="KW-0739">Sodium transport</keyword>
<keyword id="KW-0812">Transmembrane</keyword>
<keyword id="KW-1133">Transmembrane helix</keyword>
<keyword id="KW-0813">Transport</keyword>
<comment type="function">
    <text evidence="1">Na(+)/H(+) antiporter that extrudes sodium in exchange for external protons.</text>
</comment>
<comment type="catalytic activity">
    <reaction evidence="1">
        <text>Na(+)(in) + 2 H(+)(out) = Na(+)(out) + 2 H(+)(in)</text>
        <dbReference type="Rhea" id="RHEA:29251"/>
        <dbReference type="ChEBI" id="CHEBI:15378"/>
        <dbReference type="ChEBI" id="CHEBI:29101"/>
    </reaction>
    <physiologicalReaction direction="left-to-right" evidence="1">
        <dbReference type="Rhea" id="RHEA:29252"/>
    </physiologicalReaction>
</comment>
<comment type="subcellular location">
    <subcellularLocation>
        <location evidence="1">Cell inner membrane</location>
        <topology evidence="1">Multi-pass membrane protein</topology>
    </subcellularLocation>
</comment>
<comment type="similarity">
    <text evidence="1">Belongs to the NhaA Na(+)/H(+) (TC 2.A.33) antiporter family.</text>
</comment>
<reference key="1">
    <citation type="submission" date="2007-04" db="EMBL/GenBank/DDBJ databases">
        <title>Complete sequence of Shewanella putrefaciens CN-32.</title>
        <authorList>
            <consortium name="US DOE Joint Genome Institute"/>
            <person name="Copeland A."/>
            <person name="Lucas S."/>
            <person name="Lapidus A."/>
            <person name="Barry K."/>
            <person name="Detter J.C."/>
            <person name="Glavina del Rio T."/>
            <person name="Hammon N."/>
            <person name="Israni S."/>
            <person name="Dalin E."/>
            <person name="Tice H."/>
            <person name="Pitluck S."/>
            <person name="Chain P."/>
            <person name="Malfatti S."/>
            <person name="Shin M."/>
            <person name="Vergez L."/>
            <person name="Schmutz J."/>
            <person name="Larimer F."/>
            <person name="Land M."/>
            <person name="Hauser L."/>
            <person name="Kyrpides N."/>
            <person name="Mikhailova N."/>
            <person name="Romine M.F."/>
            <person name="Fredrickson J."/>
            <person name="Tiedje J."/>
            <person name="Richardson P."/>
        </authorList>
    </citation>
    <scope>NUCLEOTIDE SEQUENCE [LARGE SCALE GENOMIC DNA]</scope>
    <source>
        <strain>CN-32 / ATCC BAA-453</strain>
    </source>
</reference>
<protein>
    <recommendedName>
        <fullName evidence="1">Na(+)/H(+) antiporter NhaA</fullName>
    </recommendedName>
    <alternativeName>
        <fullName evidence="1">Sodium/proton antiporter NhaA</fullName>
    </alternativeName>
</protein>
<evidence type="ECO:0000255" key="1">
    <source>
        <dbReference type="HAMAP-Rule" id="MF_01844"/>
    </source>
</evidence>
<gene>
    <name evidence="1" type="primary">nhaA</name>
    <name type="ordered locus">Sputcn32_1147</name>
</gene>
<proteinExistence type="inferred from homology"/>
<accession>A4Y4J2</accession>
<feature type="chain" id="PRO_0000334429" description="Na(+)/H(+) antiporter NhaA">
    <location>
        <begin position="1"/>
        <end position="391"/>
    </location>
</feature>
<feature type="transmembrane region" description="Helical" evidence="1">
    <location>
        <begin position="14"/>
        <end position="34"/>
    </location>
</feature>
<feature type="transmembrane region" description="Helical" evidence="1">
    <location>
        <begin position="59"/>
        <end position="79"/>
    </location>
</feature>
<feature type="transmembrane region" description="Helical" evidence="1">
    <location>
        <begin position="95"/>
        <end position="115"/>
    </location>
</feature>
<feature type="transmembrane region" description="Helical" evidence="1">
    <location>
        <begin position="124"/>
        <end position="144"/>
    </location>
</feature>
<feature type="transmembrane region" description="Helical" evidence="1">
    <location>
        <begin position="154"/>
        <end position="174"/>
    </location>
</feature>
<feature type="transmembrane region" description="Helical" evidence="1">
    <location>
        <begin position="177"/>
        <end position="197"/>
    </location>
</feature>
<feature type="transmembrane region" description="Helical" evidence="1">
    <location>
        <begin position="213"/>
        <end position="233"/>
    </location>
</feature>
<feature type="transmembrane region" description="Helical" evidence="1">
    <location>
        <begin position="261"/>
        <end position="281"/>
    </location>
</feature>
<feature type="transmembrane region" description="Helical" evidence="1">
    <location>
        <begin position="290"/>
        <end position="310"/>
    </location>
</feature>
<feature type="transmembrane region" description="Helical" evidence="1">
    <location>
        <begin position="328"/>
        <end position="348"/>
    </location>
</feature>
<feature type="transmembrane region" description="Helical" evidence="1">
    <location>
        <begin position="363"/>
        <end position="383"/>
    </location>
</feature>
<organism>
    <name type="scientific">Shewanella putrefaciens (strain CN-32 / ATCC BAA-453)</name>
    <dbReference type="NCBI Taxonomy" id="319224"/>
    <lineage>
        <taxon>Bacteria</taxon>
        <taxon>Pseudomonadati</taxon>
        <taxon>Pseudomonadota</taxon>
        <taxon>Gammaproteobacteria</taxon>
        <taxon>Alteromonadales</taxon>
        <taxon>Shewanellaceae</taxon>
        <taxon>Shewanella</taxon>
    </lineage>
</organism>
<name>NHAA_SHEPC</name>
<dbReference type="EMBL" id="CP000681">
    <property type="protein sequence ID" value="ABP74875.1"/>
    <property type="molecule type" value="Genomic_DNA"/>
</dbReference>
<dbReference type="SMR" id="A4Y4J2"/>
<dbReference type="STRING" id="319224.Sputcn32_1147"/>
<dbReference type="KEGG" id="spc:Sputcn32_1147"/>
<dbReference type="eggNOG" id="COG3004">
    <property type="taxonomic scope" value="Bacteria"/>
</dbReference>
<dbReference type="HOGENOM" id="CLU_015803_1_0_6"/>
<dbReference type="GO" id="GO:0005886">
    <property type="term" value="C:plasma membrane"/>
    <property type="evidence" value="ECO:0007669"/>
    <property type="project" value="UniProtKB-SubCell"/>
</dbReference>
<dbReference type="GO" id="GO:0015385">
    <property type="term" value="F:sodium:proton antiporter activity"/>
    <property type="evidence" value="ECO:0007669"/>
    <property type="project" value="TreeGrafter"/>
</dbReference>
<dbReference type="GO" id="GO:0006885">
    <property type="term" value="P:regulation of pH"/>
    <property type="evidence" value="ECO:0007669"/>
    <property type="project" value="InterPro"/>
</dbReference>
<dbReference type="Gene3D" id="1.20.1530.10">
    <property type="entry name" value="Na+/H+ antiporter like domain"/>
    <property type="match status" value="1"/>
</dbReference>
<dbReference type="HAMAP" id="MF_01844">
    <property type="entry name" value="NhaA"/>
    <property type="match status" value="1"/>
</dbReference>
<dbReference type="InterPro" id="IPR023171">
    <property type="entry name" value="Na/H_antiporter_dom_sf"/>
</dbReference>
<dbReference type="InterPro" id="IPR004670">
    <property type="entry name" value="NhaA"/>
</dbReference>
<dbReference type="NCBIfam" id="TIGR00773">
    <property type="entry name" value="NhaA"/>
    <property type="match status" value="1"/>
</dbReference>
<dbReference type="NCBIfam" id="NF007111">
    <property type="entry name" value="PRK09560.1"/>
    <property type="match status" value="1"/>
</dbReference>
<dbReference type="NCBIfam" id="NF007112">
    <property type="entry name" value="PRK09561.1"/>
    <property type="match status" value="1"/>
</dbReference>
<dbReference type="PANTHER" id="PTHR30341:SF0">
    <property type="entry name" value="NA(+)_H(+) ANTIPORTER NHAA"/>
    <property type="match status" value="1"/>
</dbReference>
<dbReference type="PANTHER" id="PTHR30341">
    <property type="entry name" value="SODIUM ION/PROTON ANTIPORTER NHAA-RELATED"/>
    <property type="match status" value="1"/>
</dbReference>
<dbReference type="Pfam" id="PF06965">
    <property type="entry name" value="Na_H_antiport_1"/>
    <property type="match status" value="1"/>
</dbReference>
<sequence length="391" mass="41118">MEKAIRNFLSQESAGGILLLVAVVFAMLMANSPLSGLYQGFLGTDVQVRVGALDIHKPLLLWINDGLMALFFLLIGLEVKRELLEGALSSVAQASLPSFAAIGGMLVPAGIYLLFNYGDPVTQAGWAIPAATDIAFALGIMALLGNRVPVALKVFLLALAIIDDLGVIVIIALFYSSDLSTISLAIASVAILGLVGLNRKGITALTPYGILGLILWVAVLKSGVHATLAGVIIAFCIPLRAKDGSSPSEHLEHSLHPWSNFLILPVFAFANAGVALGNMSLDTLLSPVPIGIALGLILGKPIGVMLFSFIAVKLKLARLPDNVGWMQIAPVAAMCGIGFTMSMFIASLAFEQADPMYGDLARLGTLIGSFIAALVGYFWLSKVLPKKGVLL</sequence>